<reference key="1">
    <citation type="journal article" date="2002" name="Nature">
        <title>The genome sequence of Schizosaccharomyces pombe.</title>
        <authorList>
            <person name="Wood V."/>
            <person name="Gwilliam R."/>
            <person name="Rajandream M.A."/>
            <person name="Lyne M.H."/>
            <person name="Lyne R."/>
            <person name="Stewart A."/>
            <person name="Sgouros J.G."/>
            <person name="Peat N."/>
            <person name="Hayles J."/>
            <person name="Baker S.G."/>
            <person name="Basham D."/>
            <person name="Bowman S."/>
            <person name="Brooks K."/>
            <person name="Brown D."/>
            <person name="Brown S."/>
            <person name="Chillingworth T."/>
            <person name="Churcher C.M."/>
            <person name="Collins M."/>
            <person name="Connor R."/>
            <person name="Cronin A."/>
            <person name="Davis P."/>
            <person name="Feltwell T."/>
            <person name="Fraser A."/>
            <person name="Gentles S."/>
            <person name="Goble A."/>
            <person name="Hamlin N."/>
            <person name="Harris D.E."/>
            <person name="Hidalgo J."/>
            <person name="Hodgson G."/>
            <person name="Holroyd S."/>
            <person name="Hornsby T."/>
            <person name="Howarth S."/>
            <person name="Huckle E.J."/>
            <person name="Hunt S."/>
            <person name="Jagels K."/>
            <person name="James K.D."/>
            <person name="Jones L."/>
            <person name="Jones M."/>
            <person name="Leather S."/>
            <person name="McDonald S."/>
            <person name="McLean J."/>
            <person name="Mooney P."/>
            <person name="Moule S."/>
            <person name="Mungall K.L."/>
            <person name="Murphy L.D."/>
            <person name="Niblett D."/>
            <person name="Odell C."/>
            <person name="Oliver K."/>
            <person name="O'Neil S."/>
            <person name="Pearson D."/>
            <person name="Quail M.A."/>
            <person name="Rabbinowitsch E."/>
            <person name="Rutherford K.M."/>
            <person name="Rutter S."/>
            <person name="Saunders D."/>
            <person name="Seeger K."/>
            <person name="Sharp S."/>
            <person name="Skelton J."/>
            <person name="Simmonds M.N."/>
            <person name="Squares R."/>
            <person name="Squares S."/>
            <person name="Stevens K."/>
            <person name="Taylor K."/>
            <person name="Taylor R.G."/>
            <person name="Tivey A."/>
            <person name="Walsh S.V."/>
            <person name="Warren T."/>
            <person name="Whitehead S."/>
            <person name="Woodward J.R."/>
            <person name="Volckaert G."/>
            <person name="Aert R."/>
            <person name="Robben J."/>
            <person name="Grymonprez B."/>
            <person name="Weltjens I."/>
            <person name="Vanstreels E."/>
            <person name="Rieger M."/>
            <person name="Schaefer M."/>
            <person name="Mueller-Auer S."/>
            <person name="Gabel C."/>
            <person name="Fuchs M."/>
            <person name="Duesterhoeft A."/>
            <person name="Fritzc C."/>
            <person name="Holzer E."/>
            <person name="Moestl D."/>
            <person name="Hilbert H."/>
            <person name="Borzym K."/>
            <person name="Langer I."/>
            <person name="Beck A."/>
            <person name="Lehrach H."/>
            <person name="Reinhardt R."/>
            <person name="Pohl T.M."/>
            <person name="Eger P."/>
            <person name="Zimmermann W."/>
            <person name="Wedler H."/>
            <person name="Wambutt R."/>
            <person name="Purnelle B."/>
            <person name="Goffeau A."/>
            <person name="Cadieu E."/>
            <person name="Dreano S."/>
            <person name="Gloux S."/>
            <person name="Lelaure V."/>
            <person name="Mottier S."/>
            <person name="Galibert F."/>
            <person name="Aves S.J."/>
            <person name="Xiang Z."/>
            <person name="Hunt C."/>
            <person name="Moore K."/>
            <person name="Hurst S.M."/>
            <person name="Lucas M."/>
            <person name="Rochet M."/>
            <person name="Gaillardin C."/>
            <person name="Tallada V.A."/>
            <person name="Garzon A."/>
            <person name="Thode G."/>
            <person name="Daga R.R."/>
            <person name="Cruzado L."/>
            <person name="Jimenez J."/>
            <person name="Sanchez M."/>
            <person name="del Rey F."/>
            <person name="Benito J."/>
            <person name="Dominguez A."/>
            <person name="Revuelta J.L."/>
            <person name="Moreno S."/>
            <person name="Armstrong J."/>
            <person name="Forsburg S.L."/>
            <person name="Cerutti L."/>
            <person name="Lowe T."/>
            <person name="McCombie W.R."/>
            <person name="Paulsen I."/>
            <person name="Potashkin J."/>
            <person name="Shpakovski G.V."/>
            <person name="Ussery D."/>
            <person name="Barrell B.G."/>
            <person name="Nurse P."/>
        </authorList>
    </citation>
    <scope>NUCLEOTIDE SEQUENCE [LARGE SCALE GENOMIC DNA]</scope>
    <source>
        <strain>972 / ATCC 24843</strain>
    </source>
</reference>
<reference key="2">
    <citation type="journal article" date="2006" name="Nat. Biotechnol.">
        <title>ORFeome cloning and global analysis of protein localization in the fission yeast Schizosaccharomyces pombe.</title>
        <authorList>
            <person name="Matsuyama A."/>
            <person name="Arai R."/>
            <person name="Yashiroda Y."/>
            <person name="Shirai A."/>
            <person name="Kamata A."/>
            <person name="Sekido S."/>
            <person name="Kobayashi Y."/>
            <person name="Hashimoto A."/>
            <person name="Hamamoto M."/>
            <person name="Hiraoka Y."/>
            <person name="Horinouchi S."/>
            <person name="Yoshida M."/>
        </authorList>
    </citation>
    <scope>SUBCELLULAR LOCATION [LARGE SCALE ANALYSIS]</scope>
</reference>
<reference key="3">
    <citation type="journal article" date="2008" name="J. Proteome Res.">
        <title>Phosphoproteome analysis of fission yeast.</title>
        <authorList>
            <person name="Wilson-Grady J.T."/>
            <person name="Villen J."/>
            <person name="Gygi S.P."/>
        </authorList>
    </citation>
    <scope>PHOSPHORYLATION [LARGE SCALE ANALYSIS] AT SER-317 AND SER-319</scope>
    <scope>IDENTIFICATION BY MASS SPECTROMETRY</scope>
</reference>
<protein>
    <recommendedName>
        <fullName>ER-derived vesicles protein 41</fullName>
    </recommendedName>
</protein>
<accession>O94283</accession>
<comment type="function">
    <text evidence="1">Constituent of COPII-coated endoplasmic reticulum-derived transport vesicles. Required for efficient transport of a subset of secretory proteins to the Golgi. Facilitates retrograde transport from the Golgi to the endoplasmic reticulum (By similarity).</text>
</comment>
<comment type="subcellular location">
    <subcellularLocation>
        <location evidence="3">Endoplasmic reticulum membrane</location>
        <topology evidence="3">Multi-pass membrane protein</topology>
    </subcellularLocation>
    <subcellularLocation>
        <location evidence="3">Golgi apparatus membrane</location>
        <topology evidence="3">Multi-pass membrane protein</topology>
    </subcellularLocation>
    <subcellularLocation>
        <location evidence="3">Endoplasmic reticulum-Golgi intermediate compartment membrane</location>
        <topology evidence="3">Multi-pass membrane protein</topology>
    </subcellularLocation>
    <text evidence="1">Recycles between endoplasmic reticulum and Golgi. Resides in the endoplasmic and Golgi compartments, and then packaged into endoplasmic reticulum derived vesicles (By similarity).</text>
</comment>
<comment type="similarity">
    <text evidence="5">Belongs to the ERGIC family.</text>
</comment>
<proteinExistence type="evidence at protein level"/>
<organism>
    <name type="scientific">Schizosaccharomyces pombe (strain 972 / ATCC 24843)</name>
    <name type="common">Fission yeast</name>
    <dbReference type="NCBI Taxonomy" id="284812"/>
    <lineage>
        <taxon>Eukaryota</taxon>
        <taxon>Fungi</taxon>
        <taxon>Dikarya</taxon>
        <taxon>Ascomycota</taxon>
        <taxon>Taphrinomycotina</taxon>
        <taxon>Schizosaccharomycetes</taxon>
        <taxon>Schizosaccharomycetales</taxon>
        <taxon>Schizosaccharomycetaceae</taxon>
        <taxon>Schizosaccharomyces</taxon>
    </lineage>
</organism>
<gene>
    <name type="primary">erv41</name>
    <name type="ORF">SPBC2G5.04c</name>
</gene>
<name>ERV41_SCHPO</name>
<keyword id="KW-0256">Endoplasmic reticulum</keyword>
<keyword id="KW-0931">ER-Golgi transport</keyword>
<keyword id="KW-0325">Glycoprotein</keyword>
<keyword id="KW-0333">Golgi apparatus</keyword>
<keyword id="KW-0472">Membrane</keyword>
<keyword id="KW-0597">Phosphoprotein</keyword>
<keyword id="KW-0653">Protein transport</keyword>
<keyword id="KW-1185">Reference proteome</keyword>
<keyword id="KW-0812">Transmembrane</keyword>
<keyword id="KW-1133">Transmembrane helix</keyword>
<keyword id="KW-0813">Transport</keyword>
<feature type="chain" id="PRO_0000337254" description="ER-derived vesicles protein 41">
    <location>
        <begin position="1"/>
        <end position="333"/>
    </location>
</feature>
<feature type="topological domain" description="Cytoplasmic" evidence="1">
    <location>
        <begin position="1"/>
        <end position="30"/>
    </location>
</feature>
<feature type="transmembrane region" description="Helical" evidence="2">
    <location>
        <begin position="31"/>
        <end position="51"/>
    </location>
</feature>
<feature type="topological domain" description="Lumenal" evidence="1">
    <location>
        <begin position="52"/>
        <end position="285"/>
    </location>
</feature>
<feature type="transmembrane region" description="Helical" evidence="2">
    <location>
        <begin position="286"/>
        <end position="306"/>
    </location>
</feature>
<feature type="topological domain" description="Cytoplasmic" evidence="1">
    <location>
        <begin position="307"/>
        <end position="333"/>
    </location>
</feature>
<feature type="modified residue" description="Phosphoserine" evidence="4">
    <location>
        <position position="317"/>
    </location>
</feature>
<feature type="modified residue" description="Phosphoserine" evidence="4">
    <location>
        <position position="319"/>
    </location>
</feature>
<feature type="glycosylation site" description="N-linked (GlcNAc...) asparagine" evidence="2">
    <location>
        <position position="187"/>
    </location>
</feature>
<dbReference type="EMBL" id="CU329671">
    <property type="protein sequence ID" value="CAA21880.1"/>
    <property type="molecule type" value="Genomic_DNA"/>
</dbReference>
<dbReference type="PIR" id="T40161">
    <property type="entry name" value="T40161"/>
</dbReference>
<dbReference type="RefSeq" id="NP_596065.1">
    <property type="nucleotide sequence ID" value="NM_001021976.2"/>
</dbReference>
<dbReference type="SMR" id="O94283"/>
<dbReference type="BioGRID" id="276841">
    <property type="interactions" value="2"/>
</dbReference>
<dbReference type="FunCoup" id="O94283">
    <property type="interactions" value="47"/>
</dbReference>
<dbReference type="STRING" id="284812.O94283"/>
<dbReference type="GlyCosmos" id="O94283">
    <property type="glycosylation" value="1 site, No reported glycans"/>
</dbReference>
<dbReference type="iPTMnet" id="O94283"/>
<dbReference type="SwissPalm" id="O94283"/>
<dbReference type="PaxDb" id="4896-SPBC2G5.04c.1"/>
<dbReference type="EnsemblFungi" id="SPBC2G5.04c.1">
    <property type="protein sequence ID" value="SPBC2G5.04c.1:pep"/>
    <property type="gene ID" value="SPBC2G5.04c"/>
</dbReference>
<dbReference type="GeneID" id="2540311"/>
<dbReference type="KEGG" id="spo:2540311"/>
<dbReference type="PomBase" id="SPBC2G5.04c">
    <property type="gene designation" value="erv41"/>
</dbReference>
<dbReference type="VEuPathDB" id="FungiDB:SPBC2G5.04c"/>
<dbReference type="eggNOG" id="KOG2667">
    <property type="taxonomic scope" value="Eukaryota"/>
</dbReference>
<dbReference type="HOGENOM" id="CLU_034705_2_0_1"/>
<dbReference type="InParanoid" id="O94283"/>
<dbReference type="OMA" id="MTNHYLR"/>
<dbReference type="PhylomeDB" id="O94283"/>
<dbReference type="PRO" id="PR:O94283"/>
<dbReference type="Proteomes" id="UP000002485">
    <property type="component" value="Chromosome II"/>
</dbReference>
<dbReference type="GO" id="GO:0030134">
    <property type="term" value="C:COPII-coated ER to Golgi transport vesicle"/>
    <property type="evidence" value="ECO:0000318"/>
    <property type="project" value="GO_Central"/>
</dbReference>
<dbReference type="GO" id="GO:0005737">
    <property type="term" value="C:cytoplasm"/>
    <property type="evidence" value="ECO:0007005"/>
    <property type="project" value="PomBase"/>
</dbReference>
<dbReference type="GO" id="GO:0005783">
    <property type="term" value="C:endoplasmic reticulum"/>
    <property type="evidence" value="ECO:0007005"/>
    <property type="project" value="PomBase"/>
</dbReference>
<dbReference type="GO" id="GO:0005789">
    <property type="term" value="C:endoplasmic reticulum membrane"/>
    <property type="evidence" value="ECO:0000318"/>
    <property type="project" value="GO_Central"/>
</dbReference>
<dbReference type="GO" id="GO:0033116">
    <property type="term" value="C:endoplasmic reticulum-Golgi intermediate compartment membrane"/>
    <property type="evidence" value="ECO:0007669"/>
    <property type="project" value="UniProtKB-SubCell"/>
</dbReference>
<dbReference type="GO" id="GO:0005794">
    <property type="term" value="C:Golgi apparatus"/>
    <property type="evidence" value="ECO:0007005"/>
    <property type="project" value="PomBase"/>
</dbReference>
<dbReference type="GO" id="GO:0000139">
    <property type="term" value="C:Golgi membrane"/>
    <property type="evidence" value="ECO:0000318"/>
    <property type="project" value="GO_Central"/>
</dbReference>
<dbReference type="GO" id="GO:0006888">
    <property type="term" value="P:endoplasmic reticulum to Golgi vesicle-mediated transport"/>
    <property type="evidence" value="ECO:0000318"/>
    <property type="project" value="GO_Central"/>
</dbReference>
<dbReference type="GO" id="GO:0006886">
    <property type="term" value="P:intracellular protein transport"/>
    <property type="evidence" value="ECO:0000305"/>
    <property type="project" value="PomBase"/>
</dbReference>
<dbReference type="GO" id="GO:0006890">
    <property type="term" value="P:retrograde vesicle-mediated transport, Golgi to endoplasmic reticulum"/>
    <property type="evidence" value="ECO:0000318"/>
    <property type="project" value="GO_Central"/>
</dbReference>
<dbReference type="InterPro" id="IPR045888">
    <property type="entry name" value="Erv"/>
</dbReference>
<dbReference type="InterPro" id="IPR012936">
    <property type="entry name" value="Erv_C"/>
</dbReference>
<dbReference type="InterPro" id="IPR039542">
    <property type="entry name" value="Erv_N"/>
</dbReference>
<dbReference type="PANTHER" id="PTHR10984">
    <property type="entry name" value="ENDOPLASMIC RETICULUM-GOLGI INTERMEDIATE COMPARTMENT PROTEIN"/>
    <property type="match status" value="1"/>
</dbReference>
<dbReference type="PANTHER" id="PTHR10984:SF81">
    <property type="entry name" value="ER-DERIVED VESICLES PROTEIN ERV41"/>
    <property type="match status" value="1"/>
</dbReference>
<dbReference type="Pfam" id="PF07970">
    <property type="entry name" value="COPIIcoated_ERV"/>
    <property type="match status" value="1"/>
</dbReference>
<dbReference type="Pfam" id="PF13850">
    <property type="entry name" value="ERGIC_N"/>
    <property type="match status" value="1"/>
</dbReference>
<sequence length="333" mass="37610">MLRSRVPANIRAFDAFPKFSKEYRRQSSSRGGFFTILLSVLIVVLVFSQCVQYIRGIREQELFIYDSVSELMDLNIDITIAMPCSNLRIDVVDRTKDLVLATEALTLEEAFIKDMPTSSTIYKNDRYAGLRWARTEKFRKKNNAEPGSGTACRIYGQLVVNRVNGQLHITAPGWGYGRSNIPFHSLNFTHYIEELSFGEYYPALVNALDGHYGHANDHPFAFQYYLSVLPTSYKSSFRSFETNQYSLTENSVVRQLGFGSLPPGIFIDYDLEPLAVRVVDKHPNVASTLLRILAISGGLITVASWIERVYSSRAHRSTSEADMLGLLGKSETE</sequence>
<evidence type="ECO:0000250" key="1"/>
<evidence type="ECO:0000255" key="2"/>
<evidence type="ECO:0000269" key="3">
    <source>
    </source>
</evidence>
<evidence type="ECO:0000269" key="4">
    <source>
    </source>
</evidence>
<evidence type="ECO:0000305" key="5"/>